<keyword id="KW-0456">Lyase</keyword>
<keyword id="KW-0479">Metal-binding</keyword>
<keyword id="KW-1185">Reference proteome</keyword>
<keyword id="KW-0862">Zinc</keyword>
<evidence type="ECO:0000250" key="1"/>
<evidence type="ECO:0000255" key="2">
    <source>
        <dbReference type="PROSITE-ProRule" id="PRU01163"/>
    </source>
</evidence>
<evidence type="ECO:0000256" key="3">
    <source>
        <dbReference type="SAM" id="MobiDB-lite"/>
    </source>
</evidence>
<evidence type="ECO:0000269" key="4">
    <source>
    </source>
</evidence>
<evidence type="ECO:0000305" key="5"/>
<feature type="chain" id="PRO_0000391067" description="Lactoylglutathione lyase">
    <location>
        <begin position="1"/>
        <end position="185"/>
    </location>
</feature>
<feature type="domain" description="VOC" evidence="2">
    <location>
        <begin position="27"/>
        <end position="174"/>
    </location>
</feature>
<feature type="region of interest" description="Disordered" evidence="3">
    <location>
        <begin position="1"/>
        <end position="21"/>
    </location>
</feature>
<feature type="active site" description="Proton donor/acceptor" evidence="1">
    <location>
        <position position="170"/>
    </location>
</feature>
<feature type="binding site" evidence="1">
    <location>
        <position position="30"/>
    </location>
    <ligand>
        <name>substrate</name>
    </ligand>
</feature>
<feature type="binding site" evidence="1">
    <location>
        <position position="30"/>
    </location>
    <ligand>
        <name>Zn(2+)</name>
        <dbReference type="ChEBI" id="CHEBI:29105"/>
    </ligand>
</feature>
<feature type="binding site" evidence="1">
    <location>
        <position position="34"/>
    </location>
    <ligand>
        <name>substrate</name>
    </ligand>
</feature>
<feature type="binding site" evidence="1">
    <location>
        <position position="96"/>
    </location>
    <ligand>
        <name>Zn(2+)</name>
        <dbReference type="ChEBI" id="CHEBI:29105"/>
    </ligand>
</feature>
<feature type="binding site" evidence="1">
    <location>
        <position position="100"/>
    </location>
    <ligand>
        <name>substrate</name>
    </ligand>
</feature>
<feature type="binding site" evidence="1">
    <location>
        <position position="120"/>
    </location>
    <ligand>
        <name>substrate</name>
    </ligand>
</feature>
<feature type="binding site" evidence="1">
    <location>
        <position position="124"/>
    </location>
    <ligand>
        <name>substrate</name>
    </ligand>
</feature>
<feature type="binding site" evidence="1">
    <location>
        <position position="124"/>
    </location>
    <ligand>
        <name>Zn(2+)</name>
        <dbReference type="ChEBI" id="CHEBI:29105"/>
    </ligand>
</feature>
<feature type="binding site" evidence="1">
    <location>
        <begin position="154"/>
        <end position="155"/>
    </location>
    <ligand>
        <name>substrate</name>
    </ligand>
</feature>
<feature type="binding site" evidence="1">
    <location>
        <position position="170"/>
    </location>
    <ligand>
        <name>Zn(2+)</name>
        <dbReference type="ChEBI" id="CHEBI:29105"/>
    </ligand>
</feature>
<gene>
    <name type="primary">GLXI</name>
</gene>
<comment type="function">
    <text>Catalyzes the conversion of hemimercaptal, formed from methylglyoxal and glutathione, to S-lactoylglutathione. Active toward the hemithioacetal adducts formed by reacting methylglyoxal or phenylglyoxal with glutathione, homoglutathione or gamma-glutamylcysteine, showing no preference for homoglutathione adducts over glutathione adducts.</text>
</comment>
<comment type="catalytic activity">
    <reaction evidence="4">
        <text>(R)-S-lactoylglutathione = methylglyoxal + glutathione</text>
        <dbReference type="Rhea" id="RHEA:19069"/>
        <dbReference type="ChEBI" id="CHEBI:17158"/>
        <dbReference type="ChEBI" id="CHEBI:57474"/>
        <dbReference type="ChEBI" id="CHEBI:57925"/>
        <dbReference type="EC" id="4.4.1.5"/>
    </reaction>
</comment>
<comment type="cofactor">
    <cofactor evidence="4">
        <name>Zn(2+)</name>
        <dbReference type="ChEBI" id="CHEBI:29105"/>
    </cofactor>
    <text evidence="4">Binds 3 zinc ions per subunit, but unlike the enzyme from mammals, shows full activity in the absence of metal ions.</text>
</comment>
<comment type="biophysicochemical properties">
    <kinetics>
        <KM evidence="4">24.83 uM for methylglyoxal-glutathione adduct</KM>
        <KM evidence="4">66.02 uM for methylglyoxal-homoglutathione adduct</KM>
        <KM evidence="4">201.78 uM for methylglyoxal-gamma-glutamylcysteine adduct</KM>
        <KM evidence="4">49.32 uM for phenylglyoxal-glutathione adduct</KM>
        <KM evidence="4">26.77 uM for phenylglyoxal-homoglutathione adduct</KM>
        <KM evidence="4">244.83 uM for phenylglyoxal-gamma-glutamylcysteine adduct</KM>
        <Vmax evidence="4">3.0 nmol/sec/mg enzyme toward methylglyoxal-glutathione adduct</Vmax>
        <Vmax evidence="4">5.7 nmol/sec/mg enzyme toward methylglyoxal-homoglutathione adduct</Vmax>
        <Vmax evidence="4">7.0 nmol/sec/mg enzyme toward methylglyoxal-gamma-glutamylcysteine adduct</Vmax>
        <Vmax evidence="4">24.38 nmol/sec/mg enzyme toward phenylglyoxal-glutathione adduct</Vmax>
        <Vmax evidence="4">21.1 nmol/sec/mg enzyme toward phenylglyoxal-homoglutathione adduct</Vmax>
        <Vmax evidence="4">83.64 nmol/sec/mg enzyme toward phenylglyoxal-gamma-glutamylcysteine adduct</Vmax>
    </kinetics>
</comment>
<comment type="pathway">
    <text>Secondary metabolite metabolism; methylglyoxal degradation; (R)-lactate from methylglyoxal: step 1/2.</text>
</comment>
<comment type="subunit">
    <text evidence="4">Homodimer.</text>
</comment>
<comment type="miscellaneous">
    <text>Zinc ions may be required for the correct assembly of the enzyme but are not required for catalysis.</text>
</comment>
<comment type="similarity">
    <text evidence="5">Belongs to the glyoxalase I family.</text>
</comment>
<sequence length="185" mass="20960">MAAEPKESPSNNPGLHTTPDEATKGYIMQQTMFRIKDPKVSLDFYSRVLGMSLLKRLDFPEMKFSLYFMGYENTAEAPSNPIDKVVWTFSQKATIELTHNWGTESDPEFKGYHNGNSEPRGFGHIGVTVDDTYKACERFQNLGVEFVKKPEDGKMKGIAFIKDPDGYWIEIFDRKTIGNVTQTAA</sequence>
<dbReference type="EC" id="4.4.1.5"/>
<dbReference type="EMBL" id="AJ010423">
    <property type="protein sequence ID" value="CAA09177.1"/>
    <property type="molecule type" value="mRNA"/>
</dbReference>
<dbReference type="RefSeq" id="NP_001236152.1">
    <property type="nucleotide sequence ID" value="NM_001249223.1"/>
</dbReference>
<dbReference type="RefSeq" id="XP_006590355.1">
    <property type="nucleotide sequence ID" value="XM_006590292.4"/>
</dbReference>
<dbReference type="SMR" id="Q9ZS21"/>
<dbReference type="FunCoup" id="Q9ZS21">
    <property type="interactions" value="4438"/>
</dbReference>
<dbReference type="STRING" id="3847.Q9ZS21"/>
<dbReference type="PaxDb" id="3847-GLYMA12G08470.1"/>
<dbReference type="GeneID" id="547667"/>
<dbReference type="KEGG" id="gmx:547667"/>
<dbReference type="eggNOG" id="KOG2944">
    <property type="taxonomic scope" value="Eukaryota"/>
</dbReference>
<dbReference type="HOGENOM" id="CLU_046006_1_3_1"/>
<dbReference type="InParanoid" id="Q9ZS21"/>
<dbReference type="OrthoDB" id="16820at2759"/>
<dbReference type="BRENDA" id="4.4.1.5">
    <property type="organism ID" value="2483"/>
</dbReference>
<dbReference type="SABIO-RK" id="Q9ZS21"/>
<dbReference type="UniPathway" id="UPA00619">
    <property type="reaction ID" value="UER00675"/>
</dbReference>
<dbReference type="Proteomes" id="UP000008827">
    <property type="component" value="Unplaced"/>
</dbReference>
<dbReference type="GO" id="GO:0004462">
    <property type="term" value="F:lactoylglutathione lyase activity"/>
    <property type="evidence" value="ECO:0007669"/>
    <property type="project" value="UniProtKB-EC"/>
</dbReference>
<dbReference type="GO" id="GO:0046872">
    <property type="term" value="F:metal ion binding"/>
    <property type="evidence" value="ECO:0007669"/>
    <property type="project" value="UniProtKB-KW"/>
</dbReference>
<dbReference type="CDD" id="cd07233">
    <property type="entry name" value="GlxI_Zn"/>
    <property type="match status" value="1"/>
</dbReference>
<dbReference type="FunFam" id="3.10.180.10:FF:000011">
    <property type="entry name" value="Lactoylglutathione lyase"/>
    <property type="match status" value="1"/>
</dbReference>
<dbReference type="Gene3D" id="3.10.180.10">
    <property type="entry name" value="2,3-Dihydroxybiphenyl 1,2-Dioxygenase, domain 1"/>
    <property type="match status" value="1"/>
</dbReference>
<dbReference type="InterPro" id="IPR029068">
    <property type="entry name" value="Glyas_Bleomycin-R_OHBP_Dase"/>
</dbReference>
<dbReference type="InterPro" id="IPR004360">
    <property type="entry name" value="Glyas_Fos-R_dOase_dom"/>
</dbReference>
<dbReference type="InterPro" id="IPR004361">
    <property type="entry name" value="Glyoxalase_1"/>
</dbReference>
<dbReference type="InterPro" id="IPR018146">
    <property type="entry name" value="Glyoxalase_1_CS"/>
</dbReference>
<dbReference type="InterPro" id="IPR037523">
    <property type="entry name" value="VOC"/>
</dbReference>
<dbReference type="NCBIfam" id="TIGR00068">
    <property type="entry name" value="glyox_I"/>
    <property type="match status" value="1"/>
</dbReference>
<dbReference type="PANTHER" id="PTHR10374:SF30">
    <property type="entry name" value="LACTOYLGLUTATHIONE LYASE"/>
    <property type="match status" value="1"/>
</dbReference>
<dbReference type="PANTHER" id="PTHR10374">
    <property type="entry name" value="LACTOYLGLUTATHIONE LYASE GLYOXALASE I"/>
    <property type="match status" value="1"/>
</dbReference>
<dbReference type="Pfam" id="PF00903">
    <property type="entry name" value="Glyoxalase"/>
    <property type="match status" value="1"/>
</dbReference>
<dbReference type="SUPFAM" id="SSF54593">
    <property type="entry name" value="Glyoxalase/Bleomycin resistance protein/Dihydroxybiphenyl dioxygenase"/>
    <property type="match status" value="1"/>
</dbReference>
<dbReference type="PROSITE" id="PS00934">
    <property type="entry name" value="GLYOXALASE_I_1"/>
    <property type="match status" value="1"/>
</dbReference>
<dbReference type="PROSITE" id="PS00935">
    <property type="entry name" value="GLYOXALASE_I_2"/>
    <property type="match status" value="1"/>
</dbReference>
<dbReference type="PROSITE" id="PS51819">
    <property type="entry name" value="VOC"/>
    <property type="match status" value="1"/>
</dbReference>
<organism>
    <name type="scientific">Glycine max</name>
    <name type="common">Soybean</name>
    <name type="synonym">Glycine hispida</name>
    <dbReference type="NCBI Taxonomy" id="3847"/>
    <lineage>
        <taxon>Eukaryota</taxon>
        <taxon>Viridiplantae</taxon>
        <taxon>Streptophyta</taxon>
        <taxon>Embryophyta</taxon>
        <taxon>Tracheophyta</taxon>
        <taxon>Spermatophyta</taxon>
        <taxon>Magnoliopsida</taxon>
        <taxon>eudicotyledons</taxon>
        <taxon>Gunneridae</taxon>
        <taxon>Pentapetalae</taxon>
        <taxon>rosids</taxon>
        <taxon>fabids</taxon>
        <taxon>Fabales</taxon>
        <taxon>Fabaceae</taxon>
        <taxon>Papilionoideae</taxon>
        <taxon>50 kb inversion clade</taxon>
        <taxon>NPAAA clade</taxon>
        <taxon>indigoferoid/millettioid clade</taxon>
        <taxon>Phaseoleae</taxon>
        <taxon>Glycine</taxon>
        <taxon>Glycine subgen. Soja</taxon>
    </lineage>
</organism>
<protein>
    <recommendedName>
        <fullName>Lactoylglutathione lyase</fullName>
        <ecNumber>4.4.1.5</ecNumber>
    </recommendedName>
    <alternativeName>
        <fullName>Aldoketomutase</fullName>
    </alternativeName>
    <alternativeName>
        <fullName>Glyoxalase I</fullName>
        <shortName>GmGlyoxI</shortName>
    </alternativeName>
    <alternativeName>
        <fullName>Ketone-aldehyde mutase</fullName>
    </alternativeName>
    <alternativeName>
        <fullName>Methylglyoxalase</fullName>
    </alternativeName>
    <alternativeName>
        <fullName>S-D-lactoylglutathione methylglyoxal lyase</fullName>
    </alternativeName>
</protein>
<name>LGUL_SOYBN</name>
<reference key="1">
    <citation type="journal article" date="2000" name="Arch. Biochem. Biophys.">
        <title>Cloning and characterization of glyoxalase I from soybean.</title>
        <authorList>
            <person name="Skipsey M."/>
            <person name="Andrews C.J."/>
            <person name="Townson J.K."/>
            <person name="Jepson I."/>
            <person name="Edwards R."/>
        </authorList>
    </citation>
    <scope>NUCLEOTIDE SEQUENCE [MRNA]</scope>
    <scope>SUBUNIT</scope>
    <scope>CATALYTIC ACTIVITY</scope>
    <scope>COFACTOR</scope>
    <scope>BIOPHYSICOCHEMICAL PROPERTIES</scope>
    <source>
        <strain>cv. Mandarin</strain>
    </source>
</reference>
<accession>Q9ZS21</accession>
<proteinExistence type="evidence at protein level"/>